<name>YBEY_PSEF5</name>
<sequence length="152" mass="17315">MLELDLQRASQQPAPSDEQFRQWCELALRQRTADSELTIRLVDEAEGRELNHTWRHKDYATNVLSFPADVPDELLDIPLLGDLVICIAVVEREAAEQGKELQAHWAHLVIHGCLHLLGYDHIDDDEAEEMEALERTLLAELGHPDPYADDES</sequence>
<accession>Q4K5I1</accession>
<proteinExistence type="inferred from homology"/>
<gene>
    <name evidence="1" type="primary">ybeY</name>
    <name type="ordered locus">PFL_5434</name>
</gene>
<organism>
    <name type="scientific">Pseudomonas fluorescens (strain ATCC BAA-477 / NRRL B-23932 / Pf-5)</name>
    <dbReference type="NCBI Taxonomy" id="220664"/>
    <lineage>
        <taxon>Bacteria</taxon>
        <taxon>Pseudomonadati</taxon>
        <taxon>Pseudomonadota</taxon>
        <taxon>Gammaproteobacteria</taxon>
        <taxon>Pseudomonadales</taxon>
        <taxon>Pseudomonadaceae</taxon>
        <taxon>Pseudomonas</taxon>
    </lineage>
</organism>
<feature type="chain" id="PRO_0000284277" description="Endoribonuclease YbeY">
    <location>
        <begin position="1"/>
        <end position="152"/>
    </location>
</feature>
<feature type="binding site" evidence="1">
    <location>
        <position position="111"/>
    </location>
    <ligand>
        <name>Zn(2+)</name>
        <dbReference type="ChEBI" id="CHEBI:29105"/>
        <note>catalytic</note>
    </ligand>
</feature>
<feature type="binding site" evidence="1">
    <location>
        <position position="115"/>
    </location>
    <ligand>
        <name>Zn(2+)</name>
        <dbReference type="ChEBI" id="CHEBI:29105"/>
        <note>catalytic</note>
    </ligand>
</feature>
<feature type="binding site" evidence="1">
    <location>
        <position position="121"/>
    </location>
    <ligand>
        <name>Zn(2+)</name>
        <dbReference type="ChEBI" id="CHEBI:29105"/>
        <note>catalytic</note>
    </ligand>
</feature>
<dbReference type="EC" id="3.1.-.-" evidence="1"/>
<dbReference type="EMBL" id="CP000076">
    <property type="protein sequence ID" value="AAY94644.1"/>
    <property type="molecule type" value="Genomic_DNA"/>
</dbReference>
<dbReference type="RefSeq" id="WP_011063652.1">
    <property type="nucleotide sequence ID" value="NC_004129.6"/>
</dbReference>
<dbReference type="SMR" id="Q4K5I1"/>
<dbReference type="STRING" id="220664.PFL_5434"/>
<dbReference type="GeneID" id="57478398"/>
<dbReference type="KEGG" id="pfl:PFL_5434"/>
<dbReference type="PATRIC" id="fig|220664.5.peg.5547"/>
<dbReference type="eggNOG" id="COG0319">
    <property type="taxonomic scope" value="Bacteria"/>
</dbReference>
<dbReference type="HOGENOM" id="CLU_106710_0_1_6"/>
<dbReference type="Proteomes" id="UP000008540">
    <property type="component" value="Chromosome"/>
</dbReference>
<dbReference type="GO" id="GO:0005737">
    <property type="term" value="C:cytoplasm"/>
    <property type="evidence" value="ECO:0007669"/>
    <property type="project" value="UniProtKB-SubCell"/>
</dbReference>
<dbReference type="GO" id="GO:0004222">
    <property type="term" value="F:metalloendopeptidase activity"/>
    <property type="evidence" value="ECO:0007669"/>
    <property type="project" value="InterPro"/>
</dbReference>
<dbReference type="GO" id="GO:0004521">
    <property type="term" value="F:RNA endonuclease activity"/>
    <property type="evidence" value="ECO:0007669"/>
    <property type="project" value="UniProtKB-UniRule"/>
</dbReference>
<dbReference type="GO" id="GO:0008270">
    <property type="term" value="F:zinc ion binding"/>
    <property type="evidence" value="ECO:0007669"/>
    <property type="project" value="UniProtKB-UniRule"/>
</dbReference>
<dbReference type="GO" id="GO:0006364">
    <property type="term" value="P:rRNA processing"/>
    <property type="evidence" value="ECO:0007669"/>
    <property type="project" value="UniProtKB-UniRule"/>
</dbReference>
<dbReference type="Gene3D" id="3.40.390.30">
    <property type="entry name" value="Metalloproteases ('zincins'), catalytic domain"/>
    <property type="match status" value="1"/>
</dbReference>
<dbReference type="HAMAP" id="MF_00009">
    <property type="entry name" value="Endoribonucl_YbeY"/>
    <property type="match status" value="1"/>
</dbReference>
<dbReference type="InterPro" id="IPR023091">
    <property type="entry name" value="MetalPrtase_cat_dom_sf_prd"/>
</dbReference>
<dbReference type="InterPro" id="IPR002036">
    <property type="entry name" value="YbeY"/>
</dbReference>
<dbReference type="InterPro" id="IPR020549">
    <property type="entry name" value="YbeY_CS"/>
</dbReference>
<dbReference type="NCBIfam" id="TIGR00043">
    <property type="entry name" value="rRNA maturation RNase YbeY"/>
    <property type="match status" value="1"/>
</dbReference>
<dbReference type="PANTHER" id="PTHR46986">
    <property type="entry name" value="ENDORIBONUCLEASE YBEY, CHLOROPLASTIC"/>
    <property type="match status" value="1"/>
</dbReference>
<dbReference type="PANTHER" id="PTHR46986:SF1">
    <property type="entry name" value="ENDORIBONUCLEASE YBEY, CHLOROPLASTIC"/>
    <property type="match status" value="1"/>
</dbReference>
<dbReference type="Pfam" id="PF02130">
    <property type="entry name" value="YbeY"/>
    <property type="match status" value="1"/>
</dbReference>
<dbReference type="SUPFAM" id="SSF55486">
    <property type="entry name" value="Metalloproteases ('zincins'), catalytic domain"/>
    <property type="match status" value="1"/>
</dbReference>
<dbReference type="PROSITE" id="PS01306">
    <property type="entry name" value="UPF0054"/>
    <property type="match status" value="1"/>
</dbReference>
<keyword id="KW-0963">Cytoplasm</keyword>
<keyword id="KW-0255">Endonuclease</keyword>
<keyword id="KW-0378">Hydrolase</keyword>
<keyword id="KW-0479">Metal-binding</keyword>
<keyword id="KW-0540">Nuclease</keyword>
<keyword id="KW-0690">Ribosome biogenesis</keyword>
<keyword id="KW-0698">rRNA processing</keyword>
<keyword id="KW-0862">Zinc</keyword>
<protein>
    <recommendedName>
        <fullName evidence="1">Endoribonuclease YbeY</fullName>
        <ecNumber evidence="1">3.1.-.-</ecNumber>
    </recommendedName>
</protein>
<reference key="1">
    <citation type="journal article" date="2005" name="Nat. Biotechnol.">
        <title>Complete genome sequence of the plant commensal Pseudomonas fluorescens Pf-5.</title>
        <authorList>
            <person name="Paulsen I.T."/>
            <person name="Press C.M."/>
            <person name="Ravel J."/>
            <person name="Kobayashi D.Y."/>
            <person name="Myers G.S.A."/>
            <person name="Mavrodi D.V."/>
            <person name="DeBoy R.T."/>
            <person name="Seshadri R."/>
            <person name="Ren Q."/>
            <person name="Madupu R."/>
            <person name="Dodson R.J."/>
            <person name="Durkin A.S."/>
            <person name="Brinkac L.M."/>
            <person name="Daugherty S.C."/>
            <person name="Sullivan S.A."/>
            <person name="Rosovitz M.J."/>
            <person name="Gwinn M.L."/>
            <person name="Zhou L."/>
            <person name="Schneider D.J."/>
            <person name="Cartinhour S.W."/>
            <person name="Nelson W.C."/>
            <person name="Weidman J."/>
            <person name="Watkins K."/>
            <person name="Tran K."/>
            <person name="Khouri H."/>
            <person name="Pierson E.A."/>
            <person name="Pierson L.S. III"/>
            <person name="Thomashow L.S."/>
            <person name="Loper J.E."/>
        </authorList>
    </citation>
    <scope>NUCLEOTIDE SEQUENCE [LARGE SCALE GENOMIC DNA]</scope>
    <source>
        <strain>ATCC BAA-477 / NRRL B-23932 / Pf-5</strain>
    </source>
</reference>
<evidence type="ECO:0000255" key="1">
    <source>
        <dbReference type="HAMAP-Rule" id="MF_00009"/>
    </source>
</evidence>
<comment type="function">
    <text evidence="1">Single strand-specific metallo-endoribonuclease involved in late-stage 70S ribosome quality control and in maturation of the 3' terminus of the 16S rRNA.</text>
</comment>
<comment type="cofactor">
    <cofactor evidence="1">
        <name>Zn(2+)</name>
        <dbReference type="ChEBI" id="CHEBI:29105"/>
    </cofactor>
    <text evidence="1">Binds 1 zinc ion.</text>
</comment>
<comment type="subcellular location">
    <subcellularLocation>
        <location evidence="1">Cytoplasm</location>
    </subcellularLocation>
</comment>
<comment type="similarity">
    <text evidence="1">Belongs to the endoribonuclease YbeY family.</text>
</comment>